<proteinExistence type="evidence at protein level"/>
<protein>
    <recommendedName>
        <fullName evidence="5">Protein MALE DISCOVERER 1</fullName>
        <shortName evidence="5">AtMDIS1</shortName>
    </recommendedName>
    <alternativeName>
        <fullName evidence="6">Probable LRR receptor-like serine/threonine-protein kinase At5g45840</fullName>
        <ecNumber evidence="6">2.7.11.1</ecNumber>
    </alternativeName>
</protein>
<dbReference type="EC" id="2.7.11.1" evidence="6"/>
<dbReference type="EMBL" id="AB016870">
    <property type="protein sequence ID" value="BAB09312.1"/>
    <property type="status" value="ALT_SEQ"/>
    <property type="molecule type" value="Genomic_DNA"/>
</dbReference>
<dbReference type="EMBL" id="CP002688">
    <property type="status" value="NOT_ANNOTATED_CDS"/>
    <property type="molecule type" value="Genomic_DNA"/>
</dbReference>
<dbReference type="EMBL" id="FJ708791">
    <property type="protein sequence ID" value="ACN59382.1"/>
    <property type="molecule type" value="mRNA"/>
</dbReference>
<dbReference type="SMR" id="C0LGU7"/>
<dbReference type="BioGRID" id="19873">
    <property type="interactions" value="25"/>
</dbReference>
<dbReference type="DIP" id="DIP-61968N"/>
<dbReference type="FunCoup" id="C0LGU7">
    <property type="interactions" value="3"/>
</dbReference>
<dbReference type="IntAct" id="C0LGU7">
    <property type="interactions" value="31"/>
</dbReference>
<dbReference type="STRING" id="3702.C0LGU7"/>
<dbReference type="GlyCosmos" id="C0LGU7">
    <property type="glycosylation" value="4 sites, No reported glycans"/>
</dbReference>
<dbReference type="GlyGen" id="C0LGU7">
    <property type="glycosylation" value="4 sites"/>
</dbReference>
<dbReference type="iPTMnet" id="C0LGU7"/>
<dbReference type="PaxDb" id="3702-AT5G45840.2"/>
<dbReference type="ProteomicsDB" id="228868">
    <molecule id="C0LGU7-1"/>
</dbReference>
<dbReference type="Araport" id="AT5G45840"/>
<dbReference type="TAIR" id="AT5G45840">
    <property type="gene designation" value="MDIS1"/>
</dbReference>
<dbReference type="eggNOG" id="ENOG502QTJQ">
    <property type="taxonomic scope" value="Eukaryota"/>
</dbReference>
<dbReference type="InParanoid" id="C0LGU7"/>
<dbReference type="PhylomeDB" id="C0LGU7"/>
<dbReference type="PRO" id="PR:C0LGU7"/>
<dbReference type="Proteomes" id="UP000006548">
    <property type="component" value="Chromosome 5"/>
</dbReference>
<dbReference type="ExpressionAtlas" id="C0LGU7">
    <property type="expression patterns" value="baseline and differential"/>
</dbReference>
<dbReference type="GO" id="GO:0012505">
    <property type="term" value="C:endomembrane system"/>
    <property type="evidence" value="ECO:0007669"/>
    <property type="project" value="UniProtKB-SubCell"/>
</dbReference>
<dbReference type="GO" id="GO:0005886">
    <property type="term" value="C:plasma membrane"/>
    <property type="evidence" value="ECO:0007669"/>
    <property type="project" value="UniProtKB-SubCell"/>
</dbReference>
<dbReference type="GO" id="GO:0005524">
    <property type="term" value="F:ATP binding"/>
    <property type="evidence" value="ECO:0007669"/>
    <property type="project" value="UniProtKB-KW"/>
</dbReference>
<dbReference type="GO" id="GO:0106310">
    <property type="term" value="F:protein serine kinase activity"/>
    <property type="evidence" value="ECO:0007669"/>
    <property type="project" value="RHEA"/>
</dbReference>
<dbReference type="GO" id="GO:0004674">
    <property type="term" value="F:protein serine/threonine kinase activity"/>
    <property type="evidence" value="ECO:0007669"/>
    <property type="project" value="UniProtKB-KW"/>
</dbReference>
<dbReference type="FunFam" id="3.30.200.20:FF:000489">
    <property type="entry name" value="Inactive receptor-like serine/threonine-protein kinase"/>
    <property type="match status" value="1"/>
</dbReference>
<dbReference type="FunFam" id="1.10.510.10:FF:000950">
    <property type="entry name" value="Inactive receptor-like serine/threonine-protein kinase At2g40270"/>
    <property type="match status" value="1"/>
</dbReference>
<dbReference type="FunFam" id="3.80.10.10:FF:001386">
    <property type="entry name" value="Protein MALE DISCOVERER 1"/>
    <property type="match status" value="1"/>
</dbReference>
<dbReference type="Gene3D" id="3.30.200.20">
    <property type="entry name" value="Phosphorylase Kinase, domain 1"/>
    <property type="match status" value="1"/>
</dbReference>
<dbReference type="Gene3D" id="3.80.10.10">
    <property type="entry name" value="Ribonuclease Inhibitor"/>
    <property type="match status" value="1"/>
</dbReference>
<dbReference type="Gene3D" id="1.10.510.10">
    <property type="entry name" value="Transferase(Phosphotransferase) domain 1"/>
    <property type="match status" value="1"/>
</dbReference>
<dbReference type="InterPro" id="IPR011009">
    <property type="entry name" value="Kinase-like_dom_sf"/>
</dbReference>
<dbReference type="InterPro" id="IPR001611">
    <property type="entry name" value="Leu-rich_rpt"/>
</dbReference>
<dbReference type="InterPro" id="IPR032675">
    <property type="entry name" value="LRR_dom_sf"/>
</dbReference>
<dbReference type="InterPro" id="IPR013210">
    <property type="entry name" value="LRR_N_plant-typ"/>
</dbReference>
<dbReference type="InterPro" id="IPR000719">
    <property type="entry name" value="Prot_kinase_dom"/>
</dbReference>
<dbReference type="InterPro" id="IPR001245">
    <property type="entry name" value="Ser-Thr/Tyr_kinase_cat_dom"/>
</dbReference>
<dbReference type="PANTHER" id="PTHR46084:SF21">
    <property type="entry name" value="PROTEIN MALE DISCOVERER 1"/>
    <property type="match status" value="1"/>
</dbReference>
<dbReference type="PANTHER" id="PTHR46084">
    <property type="entry name" value="PROTEIN MALE DISCOVERER 2"/>
    <property type="match status" value="1"/>
</dbReference>
<dbReference type="Pfam" id="PF13855">
    <property type="entry name" value="LRR_8"/>
    <property type="match status" value="1"/>
</dbReference>
<dbReference type="Pfam" id="PF08263">
    <property type="entry name" value="LRRNT_2"/>
    <property type="match status" value="1"/>
</dbReference>
<dbReference type="Pfam" id="PF07714">
    <property type="entry name" value="PK_Tyr_Ser-Thr"/>
    <property type="match status" value="1"/>
</dbReference>
<dbReference type="SUPFAM" id="SSF52058">
    <property type="entry name" value="L domain-like"/>
    <property type="match status" value="1"/>
</dbReference>
<dbReference type="SUPFAM" id="SSF56112">
    <property type="entry name" value="Protein kinase-like (PK-like)"/>
    <property type="match status" value="1"/>
</dbReference>
<dbReference type="PROSITE" id="PS50011">
    <property type="entry name" value="PROTEIN_KINASE_DOM"/>
    <property type="match status" value="1"/>
</dbReference>
<gene>
    <name evidence="5" type="primary">MDIS1</name>
    <name type="ordered locus">At5g45840</name>
    <name type="ORF">K15I22.4</name>
</gene>
<sequence>MGCRWNPIGFQFSCFMFLIITLQSRSSLSLESEGFVLLKFRARVDSDPHGTLANWNVSDHDHFCSWFGVTCVDNKVQMLNLSGCSLGGTLAPELSQLSELRSLILSKNKLSGDIPNEFASFAKLEFLDLRDNNLNGVVPPELNKVLTPENLLLSGNKFAGFMTVKFLRLQSLYKVQMNKNRELSSVSADVLDCVNRKLGYCVSRRSLITRNKAKAFVLRIRATSRHYMVRRESHGKNYVVNYHPSENETSIFKRRELLEETSNLAAMPAPDTPSPSPEIITIVFPRSSGSFPALTNAKKRIPPLIPPSSPPPLPTNNTIASDPPRKFEEKSKGFKDVWLYVVIGVAAFVAMLIIVAVIFFFRKRAVKSIGPWKTGLSGQLQKAFVTGVPKLNRSELETACEDFSNIIEAFDGYTVYKGTLSSGVEIAVASTAILETREWTRAMEMTYRRRIDTMSRVNHKNFINLIGYCEEDEPFNRMMVFEYAPNGTLFEHLHDKEMEHLDWNARTRIIMGTAYCLQYMHELNPPISHTKLVSSAIYLTDDYAAKVGEVPFSGQTGSKPRKPMSGDLDQSLLPLPPEPETNVYSFGVLMLEIISGKLSDSEEEGSILKWASKYLENDNLRDMIDPTLTTYKEEELEAICDVARHCLKLDESQRPKMKYVVQQLKEVINISQEQATPRLSPLWWAELEILSSEAT</sequence>
<comment type="function">
    <text evidence="4">Involved in the pollen tube perception of the female signal.</text>
</comment>
<comment type="catalytic activity">
    <reaction evidence="6">
        <text>L-seryl-[protein] + ATP = O-phospho-L-seryl-[protein] + ADP + H(+)</text>
        <dbReference type="Rhea" id="RHEA:17989"/>
        <dbReference type="Rhea" id="RHEA-COMP:9863"/>
        <dbReference type="Rhea" id="RHEA-COMP:11604"/>
        <dbReference type="ChEBI" id="CHEBI:15378"/>
        <dbReference type="ChEBI" id="CHEBI:29999"/>
        <dbReference type="ChEBI" id="CHEBI:30616"/>
        <dbReference type="ChEBI" id="CHEBI:83421"/>
        <dbReference type="ChEBI" id="CHEBI:456216"/>
        <dbReference type="EC" id="2.7.11.1"/>
    </reaction>
</comment>
<comment type="catalytic activity">
    <reaction evidence="6">
        <text>L-threonyl-[protein] + ATP = O-phospho-L-threonyl-[protein] + ADP + H(+)</text>
        <dbReference type="Rhea" id="RHEA:46608"/>
        <dbReference type="Rhea" id="RHEA-COMP:11060"/>
        <dbReference type="Rhea" id="RHEA-COMP:11605"/>
        <dbReference type="ChEBI" id="CHEBI:15378"/>
        <dbReference type="ChEBI" id="CHEBI:30013"/>
        <dbReference type="ChEBI" id="CHEBI:30616"/>
        <dbReference type="ChEBI" id="CHEBI:61977"/>
        <dbReference type="ChEBI" id="CHEBI:456216"/>
        <dbReference type="EC" id="2.7.11.1"/>
    </reaction>
</comment>
<comment type="subunit">
    <text evidence="4">Homodimer. Interacts with MIK1, MIK2 and LURE1.2. LURE1.2 enhances the heterodimerization of MDIS1 with MIK1 or MIK2.</text>
</comment>
<comment type="interaction">
    <interactant intactId="EBI-16196163">
        <id>C0LGU7</id>
    </interactant>
    <interactant intactId="EBI-16196186">
        <id>Q4VP08</id>
        <label>LURE1.2</label>
    </interactant>
    <organismsDiffer>false</organismsDiffer>
    <experiments>5</experiments>
</comment>
<comment type="interaction">
    <interactant intactId="EBI-16196163">
        <id>C0LGU7</id>
    </interactant>
    <interactant intactId="EBI-16196224">
        <id>Q9M0G7</id>
        <label>MIK1</label>
    </interactant>
    <organismsDiffer>false</organismsDiffer>
    <experiments>7</experiments>
</comment>
<comment type="interaction">
    <interactant intactId="EBI-16196163">
        <id>C0LGU7</id>
    </interactant>
    <interactant intactId="EBI-2270407">
        <id>Q8VZG8</id>
        <label>MIK2</label>
    </interactant>
    <organismsDiffer>false</organismsDiffer>
    <experiments>5</experiments>
</comment>
<comment type="interaction">
    <interactant intactId="EBI-16196163">
        <id>C0LGU7</id>
    </interactant>
    <interactant intactId="EBI-17121474">
        <id>Q93ZS4</id>
        <label>NIK3</label>
    </interactant>
    <organismsDiffer>false</organismsDiffer>
    <experiments>2</experiments>
</comment>
<comment type="interaction">
    <interactant intactId="EBI-16196163">
        <id>C0LGU7</id>
    </interactant>
    <interactant intactId="EBI-20652612">
        <id>Q9FZ59</id>
        <label>PEPR2</label>
    </interactant>
    <organismsDiffer>false</organismsDiffer>
    <experiments>2</experiments>
</comment>
<comment type="interaction">
    <interactant intactId="EBI-16196163">
        <id>C0LGU7</id>
    </interactant>
    <interactant intactId="EBI-2023970">
        <id>P43298</id>
        <label>TMK1</label>
    </interactant>
    <organismsDiffer>false</organismsDiffer>
    <experiments>2</experiments>
</comment>
<comment type="subcellular location">
    <subcellularLocation>
        <location evidence="4">Cell membrane</location>
        <topology evidence="6">Single-pass type I membrane protein</topology>
    </subcellularLocation>
    <subcellularLocation>
        <location evidence="4">Endomembrane system</location>
    </subcellularLocation>
    <text evidence="4">LURE1.2 binding triggers endocytosis in the pollen tube tip.</text>
</comment>
<comment type="alternative products">
    <event type="alternative splicing"/>
    <isoform>
        <id>C0LGU7-1</id>
        <name>1</name>
        <sequence type="displayed"/>
    </isoform>
    <text>A number of isoforms are produced. According to EST sequences.</text>
</comment>
<comment type="tissue specificity">
    <text evidence="4">Expressed in pollen tubes and seedlings.</text>
</comment>
<comment type="PTM">
    <text evidence="4">Phosphorylated by MIK1.</text>
</comment>
<comment type="disruption phenotype">
    <text evidence="4">Decreased micropylar guidance and fertilization efficiency.</text>
</comment>
<comment type="similarity">
    <text evidence="2">Belongs to the protein kinase superfamily. Ser/Thr protein kinase family.</text>
</comment>
<comment type="sequence caution" evidence="6">
    <conflict type="erroneous gene model prediction">
        <sequence resource="EMBL-CDS" id="BAB09312"/>
    </conflict>
</comment>
<feature type="signal peptide" evidence="1">
    <location>
        <begin position="1"/>
        <end position="29"/>
    </location>
</feature>
<feature type="chain" id="PRO_0000387564" description="Protein MALE DISCOVERER 1">
    <location>
        <begin position="30"/>
        <end position="695"/>
    </location>
</feature>
<feature type="topological domain" description="Extracellular" evidence="1">
    <location>
        <begin position="30"/>
        <end position="340"/>
    </location>
</feature>
<feature type="transmembrane region" description="Helical" evidence="1">
    <location>
        <begin position="341"/>
        <end position="361"/>
    </location>
</feature>
<feature type="topological domain" description="Cytoplasmic" evidence="1">
    <location>
        <begin position="362"/>
        <end position="695"/>
    </location>
</feature>
<feature type="repeat" description="LRR 1" evidence="1">
    <location>
        <begin position="75"/>
        <end position="98"/>
    </location>
</feature>
<feature type="repeat" description="LRR 2" evidence="1">
    <location>
        <begin position="99"/>
        <end position="121"/>
    </location>
</feature>
<feature type="repeat" description="LRR 3" evidence="1">
    <location>
        <begin position="123"/>
        <end position="144"/>
    </location>
</feature>
<feature type="repeat" description="LRR 4" evidence="1">
    <location>
        <begin position="147"/>
        <end position="168"/>
    </location>
</feature>
<feature type="domain" description="Protein kinase" evidence="2">
    <location>
        <begin position="363"/>
        <end position="668"/>
    </location>
</feature>
<feature type="region of interest" description="Disordered" evidence="3">
    <location>
        <begin position="302"/>
        <end position="325"/>
    </location>
</feature>
<feature type="compositionally biased region" description="Pro residues" evidence="3">
    <location>
        <begin position="303"/>
        <end position="314"/>
    </location>
</feature>
<feature type="modified residue" description="Phosphoserine" evidence="4">
    <location>
        <position position="652"/>
    </location>
</feature>
<feature type="glycosylation site" description="N-linked (GlcNAc...) asparagine" evidence="1">
    <location>
        <position position="56"/>
    </location>
</feature>
<feature type="glycosylation site" description="N-linked (GlcNAc...) asparagine" evidence="1">
    <location>
        <position position="80"/>
    </location>
</feature>
<feature type="glycosylation site" description="N-linked (GlcNAc...) asparagine" evidence="1">
    <location>
        <position position="247"/>
    </location>
</feature>
<feature type="glycosylation site" description="N-linked (GlcNAc...) asparagine" evidence="1">
    <location>
        <position position="316"/>
    </location>
</feature>
<name>MDIS1_ARATH</name>
<organism>
    <name type="scientific">Arabidopsis thaliana</name>
    <name type="common">Mouse-ear cress</name>
    <dbReference type="NCBI Taxonomy" id="3702"/>
    <lineage>
        <taxon>Eukaryota</taxon>
        <taxon>Viridiplantae</taxon>
        <taxon>Streptophyta</taxon>
        <taxon>Embryophyta</taxon>
        <taxon>Tracheophyta</taxon>
        <taxon>Spermatophyta</taxon>
        <taxon>Magnoliopsida</taxon>
        <taxon>eudicotyledons</taxon>
        <taxon>Gunneridae</taxon>
        <taxon>Pentapetalae</taxon>
        <taxon>rosids</taxon>
        <taxon>malvids</taxon>
        <taxon>Brassicales</taxon>
        <taxon>Brassicaceae</taxon>
        <taxon>Camelineae</taxon>
        <taxon>Arabidopsis</taxon>
    </lineage>
</organism>
<reference key="1">
    <citation type="journal article" date="1998" name="DNA Res.">
        <title>Structural analysis of Arabidopsis thaliana chromosome 5. VIII. Sequence features of the regions of 1,081,958 bp covered by seventeen physically assigned P1 and TAC clones.</title>
        <authorList>
            <person name="Asamizu E."/>
            <person name="Sato S."/>
            <person name="Kaneko T."/>
            <person name="Nakamura Y."/>
            <person name="Kotani H."/>
            <person name="Miyajima N."/>
            <person name="Tabata S."/>
        </authorList>
    </citation>
    <scope>NUCLEOTIDE SEQUENCE [LARGE SCALE GENOMIC DNA]</scope>
    <source>
        <strain>cv. Columbia</strain>
    </source>
</reference>
<reference key="2">
    <citation type="journal article" date="2017" name="Plant J.">
        <title>Araport11: a complete reannotation of the Arabidopsis thaliana reference genome.</title>
        <authorList>
            <person name="Cheng C.Y."/>
            <person name="Krishnakumar V."/>
            <person name="Chan A.P."/>
            <person name="Thibaud-Nissen F."/>
            <person name="Schobel S."/>
            <person name="Town C.D."/>
        </authorList>
    </citation>
    <scope>GENOME REANNOTATION</scope>
    <source>
        <strain>cv. Columbia</strain>
    </source>
</reference>
<reference key="3">
    <citation type="journal article" date="2010" name="BMC Genomics">
        <title>Genome-wide cloning and sequence analysis of leucine-rich repeat receptor-like protein kinase genes in Arabidopsis thaliana.</title>
        <authorList>
            <person name="Gou X."/>
            <person name="He K."/>
            <person name="Yang H."/>
            <person name="Yuan T."/>
            <person name="Lin H."/>
            <person name="Clouse S.D."/>
            <person name="Li J."/>
        </authorList>
    </citation>
    <scope>NUCLEOTIDE SEQUENCE [LARGE SCALE MRNA]</scope>
    <source>
        <strain>cv. Columbia</strain>
    </source>
</reference>
<reference key="4">
    <citation type="journal article" date="2016" name="Nature">
        <title>A receptor heteromer mediates the male perception of female attractants in plants.</title>
        <authorList>
            <person name="Wang T."/>
            <person name="Liang L."/>
            <person name="Xue Y."/>
            <person name="Jia P.F."/>
            <person name="Chen W."/>
            <person name="Zhang M.X."/>
            <person name="Wang Y.C."/>
            <person name="Li H.J."/>
            <person name="Yang W.C."/>
        </authorList>
    </citation>
    <scope>FUNCTION</scope>
    <scope>DISRUPTION PHENOTYPE</scope>
    <scope>INTERACTION WITH MIK1; MIK2 AND LURE1.2</scope>
    <scope>TISSUE SPECIFICITY</scope>
    <scope>SUBCELLULAR LOCATION</scope>
    <scope>PHOSPHORYLATION AT SER-652</scope>
    <scope>SUBUNIT</scope>
</reference>
<keyword id="KW-0025">Alternative splicing</keyword>
<keyword id="KW-0067">ATP-binding</keyword>
<keyword id="KW-1003">Cell membrane</keyword>
<keyword id="KW-0325">Glycoprotein</keyword>
<keyword id="KW-0418">Kinase</keyword>
<keyword id="KW-0433">Leucine-rich repeat</keyword>
<keyword id="KW-0472">Membrane</keyword>
<keyword id="KW-0547">Nucleotide-binding</keyword>
<keyword id="KW-0597">Phosphoprotein</keyword>
<keyword id="KW-0675">Receptor</keyword>
<keyword id="KW-1185">Reference proteome</keyword>
<keyword id="KW-0677">Repeat</keyword>
<keyword id="KW-0723">Serine/threonine-protein kinase</keyword>
<keyword id="KW-0732">Signal</keyword>
<keyword id="KW-0808">Transferase</keyword>
<keyword id="KW-0812">Transmembrane</keyword>
<keyword id="KW-1133">Transmembrane helix</keyword>
<accession>C0LGU7</accession>
<accession>F4KEN6</accession>
<accession>Q9FJ52</accession>
<evidence type="ECO:0000255" key="1"/>
<evidence type="ECO:0000255" key="2">
    <source>
        <dbReference type="PROSITE-ProRule" id="PRU00159"/>
    </source>
</evidence>
<evidence type="ECO:0000256" key="3">
    <source>
        <dbReference type="SAM" id="MobiDB-lite"/>
    </source>
</evidence>
<evidence type="ECO:0000269" key="4">
    <source>
    </source>
</evidence>
<evidence type="ECO:0000303" key="5">
    <source>
    </source>
</evidence>
<evidence type="ECO:0000305" key="6"/>